<proteinExistence type="evidence at protein level"/>
<protein>
    <recommendedName>
        <fullName>WAP four-disulfide core domain protein 8</fullName>
    </recommendedName>
    <alternativeName>
        <fullName>Putative protease inhibitor WAP8</fullName>
    </alternativeName>
</protein>
<reference key="1">
    <citation type="journal article" date="2002" name="Biochem. J.">
        <title>A locus on human chromosome 20 contains several genes expressing protease inhibitor domains with homology to whey acidic protein.</title>
        <authorList>
            <person name="Clauss A."/>
            <person name="Lilja H."/>
            <person name="Lundwall A."/>
        </authorList>
    </citation>
    <scope>NUCLEOTIDE SEQUENCE [MRNA]</scope>
    <scope>VARIANT SER-137</scope>
</reference>
<reference key="2">
    <citation type="journal article" date="2001" name="Nature">
        <title>The DNA sequence and comparative analysis of human chromosome 20.</title>
        <authorList>
            <person name="Deloukas P."/>
            <person name="Matthews L.H."/>
            <person name="Ashurst J.L."/>
            <person name="Burton J."/>
            <person name="Gilbert J.G.R."/>
            <person name="Jones M."/>
            <person name="Stavrides G."/>
            <person name="Almeida J.P."/>
            <person name="Babbage A.K."/>
            <person name="Bagguley C.L."/>
            <person name="Bailey J."/>
            <person name="Barlow K.F."/>
            <person name="Bates K.N."/>
            <person name="Beard L.M."/>
            <person name="Beare D.M."/>
            <person name="Beasley O.P."/>
            <person name="Bird C.P."/>
            <person name="Blakey S.E."/>
            <person name="Bridgeman A.M."/>
            <person name="Brown A.J."/>
            <person name="Buck D."/>
            <person name="Burrill W.D."/>
            <person name="Butler A.P."/>
            <person name="Carder C."/>
            <person name="Carter N.P."/>
            <person name="Chapman J.C."/>
            <person name="Clamp M."/>
            <person name="Clark G."/>
            <person name="Clark L.N."/>
            <person name="Clark S.Y."/>
            <person name="Clee C.M."/>
            <person name="Clegg S."/>
            <person name="Cobley V.E."/>
            <person name="Collier R.E."/>
            <person name="Connor R.E."/>
            <person name="Corby N.R."/>
            <person name="Coulson A."/>
            <person name="Coville G.J."/>
            <person name="Deadman R."/>
            <person name="Dhami P.D."/>
            <person name="Dunn M."/>
            <person name="Ellington A.G."/>
            <person name="Frankland J.A."/>
            <person name="Fraser A."/>
            <person name="French L."/>
            <person name="Garner P."/>
            <person name="Grafham D.V."/>
            <person name="Griffiths C."/>
            <person name="Griffiths M.N.D."/>
            <person name="Gwilliam R."/>
            <person name="Hall R.E."/>
            <person name="Hammond S."/>
            <person name="Harley J.L."/>
            <person name="Heath P.D."/>
            <person name="Ho S."/>
            <person name="Holden J.L."/>
            <person name="Howden P.J."/>
            <person name="Huckle E."/>
            <person name="Hunt A.R."/>
            <person name="Hunt S.E."/>
            <person name="Jekosch K."/>
            <person name="Johnson C.M."/>
            <person name="Johnson D."/>
            <person name="Kay M.P."/>
            <person name="Kimberley A.M."/>
            <person name="King A."/>
            <person name="Knights A."/>
            <person name="Laird G.K."/>
            <person name="Lawlor S."/>
            <person name="Lehvaeslaiho M.H."/>
            <person name="Leversha M.A."/>
            <person name="Lloyd C."/>
            <person name="Lloyd D.M."/>
            <person name="Lovell J.D."/>
            <person name="Marsh V.L."/>
            <person name="Martin S.L."/>
            <person name="McConnachie L.J."/>
            <person name="McLay K."/>
            <person name="McMurray A.A."/>
            <person name="Milne S.A."/>
            <person name="Mistry D."/>
            <person name="Moore M.J.F."/>
            <person name="Mullikin J.C."/>
            <person name="Nickerson T."/>
            <person name="Oliver K."/>
            <person name="Parker A."/>
            <person name="Patel R."/>
            <person name="Pearce T.A.V."/>
            <person name="Peck A.I."/>
            <person name="Phillimore B.J.C.T."/>
            <person name="Prathalingam S.R."/>
            <person name="Plumb R.W."/>
            <person name="Ramsay H."/>
            <person name="Rice C.M."/>
            <person name="Ross M.T."/>
            <person name="Scott C.E."/>
            <person name="Sehra H.K."/>
            <person name="Shownkeen R."/>
            <person name="Sims S."/>
            <person name="Skuce C.D."/>
            <person name="Smith M.L."/>
            <person name="Soderlund C."/>
            <person name="Steward C.A."/>
            <person name="Sulston J.E."/>
            <person name="Swann R.M."/>
            <person name="Sycamore N."/>
            <person name="Taylor R."/>
            <person name="Tee L."/>
            <person name="Thomas D.W."/>
            <person name="Thorpe A."/>
            <person name="Tracey A."/>
            <person name="Tromans A.C."/>
            <person name="Vaudin M."/>
            <person name="Wall M."/>
            <person name="Wallis J.M."/>
            <person name="Whitehead S.L."/>
            <person name="Whittaker P."/>
            <person name="Willey D.L."/>
            <person name="Williams L."/>
            <person name="Williams S.A."/>
            <person name="Wilming L."/>
            <person name="Wray P.W."/>
            <person name="Hubbard T."/>
            <person name="Durbin R.M."/>
            <person name="Bentley D.R."/>
            <person name="Beck S."/>
            <person name="Rogers J."/>
        </authorList>
    </citation>
    <scope>NUCLEOTIDE SEQUENCE [LARGE SCALE GENOMIC DNA]</scope>
</reference>
<reference key="3">
    <citation type="submission" date="2005-09" db="EMBL/GenBank/DDBJ databases">
        <authorList>
            <person name="Mural R.J."/>
            <person name="Istrail S."/>
            <person name="Sutton G.G."/>
            <person name="Florea L."/>
            <person name="Halpern A.L."/>
            <person name="Mobarry C.M."/>
            <person name="Lippert R."/>
            <person name="Walenz B."/>
            <person name="Shatkay H."/>
            <person name="Dew I."/>
            <person name="Miller J.R."/>
            <person name="Flanigan M.J."/>
            <person name="Edwards N.J."/>
            <person name="Bolanos R."/>
            <person name="Fasulo D."/>
            <person name="Halldorsson B.V."/>
            <person name="Hannenhalli S."/>
            <person name="Turner R."/>
            <person name="Yooseph S."/>
            <person name="Lu F."/>
            <person name="Nusskern D.R."/>
            <person name="Shue B.C."/>
            <person name="Zheng X.H."/>
            <person name="Zhong F."/>
            <person name="Delcher A.L."/>
            <person name="Huson D.H."/>
            <person name="Kravitz S.A."/>
            <person name="Mouchard L."/>
            <person name="Reinert K."/>
            <person name="Remington K.A."/>
            <person name="Clark A.G."/>
            <person name="Waterman M.S."/>
            <person name="Eichler E.E."/>
            <person name="Adams M.D."/>
            <person name="Hunkapiller M.W."/>
            <person name="Myers E.W."/>
            <person name="Venter J.C."/>
        </authorList>
    </citation>
    <scope>NUCLEOTIDE SEQUENCE [LARGE SCALE GENOMIC DNA]</scope>
</reference>
<comment type="subcellular location">
    <subcellularLocation>
        <location evidence="6">Secreted</location>
    </subcellularLocation>
</comment>
<comment type="tissue specificity">
    <text>Expressed ubiquitously, the highest levels are found in the epididymis followed by testis and trachea.</text>
</comment>
<evidence type="ECO:0000250" key="1"/>
<evidence type="ECO:0000255" key="2"/>
<evidence type="ECO:0000255" key="3">
    <source>
        <dbReference type="PROSITE-ProRule" id="PRU00031"/>
    </source>
</evidence>
<evidence type="ECO:0000255" key="4">
    <source>
        <dbReference type="PROSITE-ProRule" id="PRU00722"/>
    </source>
</evidence>
<evidence type="ECO:0000269" key="5">
    <source>
    </source>
</evidence>
<evidence type="ECO:0000305" key="6"/>
<sequence>MWTVRTEGGHFPLHSPTFSWRNVAFLLLLSLALEWTSAMLTKKIKHKPGLCPKERLTCTTELPDSCNTDFDCKEYQKCCFFACQKKCMDPFQEPCMLPVRHGNCNHEAQRWHFDFKNYRCTPFKYRGCEGNANNFLNEDACRTACMLIVKDGQCPLFPFTERKECPPSCHSDIDCPQTDKCCESRCGFVCARAWTVKKGFCPRKPLLCTKIDKPKCLQDEECPLVEKCCSHCGLKCMDPRR</sequence>
<feature type="signal peptide" evidence="2">
    <location>
        <begin position="1"/>
        <end position="38"/>
    </location>
</feature>
<feature type="chain" id="PRO_0000041384" description="WAP four-disulfide core domain protein 8">
    <location>
        <begin position="39"/>
        <end position="241"/>
    </location>
</feature>
<feature type="domain" description="WAP 1" evidence="4">
    <location>
        <begin position="44"/>
        <end position="91"/>
    </location>
</feature>
<feature type="domain" description="BPTI/Kunitz inhibitor" evidence="3">
    <location>
        <begin position="95"/>
        <end position="145"/>
    </location>
</feature>
<feature type="domain" description="WAP 2" evidence="4">
    <location>
        <begin position="147"/>
        <end position="194"/>
    </location>
</feature>
<feature type="domain" description="WAP 3" evidence="4">
    <location>
        <begin position="195"/>
        <end position="240"/>
    </location>
</feature>
<feature type="disulfide bond" evidence="1">
    <location>
        <begin position="51"/>
        <end position="79"/>
    </location>
</feature>
<feature type="disulfide bond" evidence="1">
    <location>
        <begin position="58"/>
        <end position="83"/>
    </location>
</feature>
<feature type="disulfide bond" evidence="1">
    <location>
        <begin position="66"/>
        <end position="78"/>
    </location>
</feature>
<feature type="disulfide bond" evidence="1">
    <location>
        <begin position="72"/>
        <end position="87"/>
    </location>
</feature>
<feature type="disulfide bond" evidence="1">
    <location>
        <begin position="95"/>
        <end position="145"/>
    </location>
</feature>
<feature type="disulfide bond" evidence="1">
    <location>
        <begin position="104"/>
        <end position="128"/>
    </location>
</feature>
<feature type="disulfide bond" evidence="1">
    <location>
        <begin position="120"/>
        <end position="141"/>
    </location>
</feature>
<feature type="disulfide bond" evidence="1">
    <location>
        <begin position="154"/>
        <end position="182"/>
    </location>
</feature>
<feature type="disulfide bond" evidence="1">
    <location>
        <begin position="165"/>
        <end position="186"/>
    </location>
</feature>
<feature type="disulfide bond" evidence="1">
    <location>
        <begin position="169"/>
        <end position="181"/>
    </location>
</feature>
<feature type="disulfide bond" evidence="1">
    <location>
        <begin position="175"/>
        <end position="190"/>
    </location>
</feature>
<feature type="disulfide bond" evidence="1">
    <location>
        <begin position="201"/>
        <end position="229"/>
    </location>
</feature>
<feature type="disulfide bond" evidence="1">
    <location>
        <begin position="208"/>
        <end position="232"/>
    </location>
</feature>
<feature type="disulfide bond" evidence="1">
    <location>
        <begin position="216"/>
        <end position="228"/>
    </location>
</feature>
<feature type="disulfide bond" evidence="1">
    <location>
        <begin position="222"/>
        <end position="236"/>
    </location>
</feature>
<feature type="sequence variant" id="VAR_021910" description="In dbSNP:rs2272955.">
    <original>M</original>
    <variation>T</variation>
    <location>
        <position position="96"/>
    </location>
</feature>
<feature type="sequence variant" id="VAR_030861" description="In dbSNP:rs2250860." evidence="5">
    <original>N</original>
    <variation>S</variation>
    <location>
        <position position="137"/>
    </location>
</feature>
<keyword id="KW-1015">Disulfide bond</keyword>
<keyword id="KW-0646">Protease inhibitor</keyword>
<keyword id="KW-1267">Proteomics identification</keyword>
<keyword id="KW-1185">Reference proteome</keyword>
<keyword id="KW-0677">Repeat</keyword>
<keyword id="KW-0964">Secreted</keyword>
<keyword id="KW-0722">Serine protease inhibitor</keyword>
<keyword id="KW-0732">Signal</keyword>
<gene>
    <name type="primary">WFDC8</name>
    <name type="synonym">C20orf170</name>
    <name type="synonym">WAP8</name>
</gene>
<organism>
    <name type="scientific">Homo sapiens</name>
    <name type="common">Human</name>
    <dbReference type="NCBI Taxonomy" id="9606"/>
    <lineage>
        <taxon>Eukaryota</taxon>
        <taxon>Metazoa</taxon>
        <taxon>Chordata</taxon>
        <taxon>Craniata</taxon>
        <taxon>Vertebrata</taxon>
        <taxon>Euteleostomi</taxon>
        <taxon>Mammalia</taxon>
        <taxon>Eutheria</taxon>
        <taxon>Euarchontoglires</taxon>
        <taxon>Primates</taxon>
        <taxon>Haplorrhini</taxon>
        <taxon>Catarrhini</taxon>
        <taxon>Hominidae</taxon>
        <taxon>Homo</taxon>
    </lineage>
</organism>
<accession>Q8IUA0</accession>
<accession>E1P623</accession>
<accession>Q5TDV2</accession>
<accession>Q96A34</accession>
<name>WFDC8_HUMAN</name>
<dbReference type="EMBL" id="AF492015">
    <property type="protein sequence ID" value="AAN70997.1"/>
    <property type="molecule type" value="mRNA"/>
</dbReference>
<dbReference type="EMBL" id="AF492016">
    <property type="protein sequence ID" value="AAN70998.1"/>
    <property type="molecule type" value="mRNA"/>
</dbReference>
<dbReference type="EMBL" id="AL591715">
    <property type="protein sequence ID" value="CAC39449.1"/>
    <property type="molecule type" value="mRNA"/>
</dbReference>
<dbReference type="EMBL" id="AL121778">
    <property type="status" value="NOT_ANNOTATED_CDS"/>
    <property type="molecule type" value="Genomic_DNA"/>
</dbReference>
<dbReference type="EMBL" id="AL031663">
    <property type="status" value="NOT_ANNOTATED_CDS"/>
    <property type="molecule type" value="Genomic_DNA"/>
</dbReference>
<dbReference type="EMBL" id="CH471077">
    <property type="protein sequence ID" value="EAW75828.1"/>
    <property type="molecule type" value="Genomic_DNA"/>
</dbReference>
<dbReference type="EMBL" id="CH471077">
    <property type="protein sequence ID" value="EAW75829.1"/>
    <property type="molecule type" value="Genomic_DNA"/>
</dbReference>
<dbReference type="CCDS" id="CCDS13361.1"/>
<dbReference type="RefSeq" id="NP_570966.2">
    <property type="nucleotide sequence ID" value="NM_130896.3"/>
</dbReference>
<dbReference type="RefSeq" id="NP_852611.2">
    <property type="nucleotide sequence ID" value="NM_181510.3"/>
</dbReference>
<dbReference type="SMR" id="Q8IUA0"/>
<dbReference type="BioGRID" id="124676">
    <property type="interactions" value="16"/>
</dbReference>
<dbReference type="FunCoup" id="Q8IUA0">
    <property type="interactions" value="1"/>
</dbReference>
<dbReference type="IntAct" id="Q8IUA0">
    <property type="interactions" value="3"/>
</dbReference>
<dbReference type="STRING" id="9606.ENSP00000361735"/>
<dbReference type="MEROPS" id="I02.971"/>
<dbReference type="GlyGen" id="Q8IUA0">
    <property type="glycosylation" value="1 site, 1 O-linked glycan (1 site)"/>
</dbReference>
<dbReference type="iPTMnet" id="Q8IUA0"/>
<dbReference type="PhosphoSitePlus" id="Q8IUA0"/>
<dbReference type="BioMuta" id="WFDC8"/>
<dbReference type="DMDM" id="126302615"/>
<dbReference type="MassIVE" id="Q8IUA0"/>
<dbReference type="PaxDb" id="9606-ENSP00000361735"/>
<dbReference type="PeptideAtlas" id="Q8IUA0"/>
<dbReference type="ProteomicsDB" id="70526"/>
<dbReference type="Antibodypedia" id="63192">
    <property type="antibodies" value="32 antibodies from 7 providers"/>
</dbReference>
<dbReference type="DNASU" id="90199"/>
<dbReference type="Ensembl" id="ENST00000289953.3">
    <property type="protein sequence ID" value="ENSP00000289953.2"/>
    <property type="gene ID" value="ENSG00000158901.12"/>
</dbReference>
<dbReference type="Ensembl" id="ENST00000357199.8">
    <property type="protein sequence ID" value="ENSP00000361735.3"/>
    <property type="gene ID" value="ENSG00000158901.12"/>
</dbReference>
<dbReference type="GeneID" id="90199"/>
<dbReference type="KEGG" id="hsa:90199"/>
<dbReference type="MANE-Select" id="ENST00000289953.3">
    <property type="protein sequence ID" value="ENSP00000289953.2"/>
    <property type="RefSeq nucleotide sequence ID" value="NM_130896.3"/>
    <property type="RefSeq protein sequence ID" value="NP_570966.2"/>
</dbReference>
<dbReference type="UCSC" id="uc002xow.4">
    <property type="organism name" value="human"/>
</dbReference>
<dbReference type="AGR" id="HGNC:16163"/>
<dbReference type="CTD" id="90199"/>
<dbReference type="GeneCards" id="WFDC8"/>
<dbReference type="HGNC" id="HGNC:16163">
    <property type="gene designation" value="WFDC8"/>
</dbReference>
<dbReference type="HPA" id="ENSG00000158901">
    <property type="expression patterns" value="Tissue enriched (epididymis)"/>
</dbReference>
<dbReference type="neXtProt" id="NX_Q8IUA0"/>
<dbReference type="OpenTargets" id="ENSG00000158901"/>
<dbReference type="PharmGKB" id="PA25713"/>
<dbReference type="VEuPathDB" id="HostDB:ENSG00000158901"/>
<dbReference type="eggNOG" id="KOG4295">
    <property type="taxonomic scope" value="Eukaryota"/>
</dbReference>
<dbReference type="GeneTree" id="ENSGT00940000162037"/>
<dbReference type="HOGENOM" id="CLU_092095_0_0_1"/>
<dbReference type="InParanoid" id="Q8IUA0"/>
<dbReference type="OMA" id="GFCPHKP"/>
<dbReference type="OrthoDB" id="196393at2759"/>
<dbReference type="PAN-GO" id="Q8IUA0">
    <property type="GO annotations" value="0 GO annotations based on evolutionary models"/>
</dbReference>
<dbReference type="PhylomeDB" id="Q8IUA0"/>
<dbReference type="TreeFam" id="TF335948"/>
<dbReference type="PathwayCommons" id="Q8IUA0"/>
<dbReference type="BioGRID-ORCS" id="90199">
    <property type="hits" value="5 hits in 1134 CRISPR screens"/>
</dbReference>
<dbReference type="ChiTaRS" id="WFDC8">
    <property type="organism name" value="human"/>
</dbReference>
<dbReference type="GenomeRNAi" id="90199"/>
<dbReference type="Pharos" id="Q8IUA0">
    <property type="development level" value="Tdark"/>
</dbReference>
<dbReference type="PRO" id="PR:Q8IUA0"/>
<dbReference type="Proteomes" id="UP000005640">
    <property type="component" value="Chromosome 20"/>
</dbReference>
<dbReference type="RNAct" id="Q8IUA0">
    <property type="molecule type" value="protein"/>
</dbReference>
<dbReference type="Bgee" id="ENSG00000158901">
    <property type="expression patterns" value="Expressed in corpus epididymis and 27 other cell types or tissues"/>
</dbReference>
<dbReference type="ExpressionAtlas" id="Q8IUA0">
    <property type="expression patterns" value="baseline and differential"/>
</dbReference>
<dbReference type="GO" id="GO:0005576">
    <property type="term" value="C:extracellular region"/>
    <property type="evidence" value="ECO:0007669"/>
    <property type="project" value="UniProtKB-SubCell"/>
</dbReference>
<dbReference type="GO" id="GO:0004867">
    <property type="term" value="F:serine-type endopeptidase inhibitor activity"/>
    <property type="evidence" value="ECO:0007669"/>
    <property type="project" value="UniProtKB-KW"/>
</dbReference>
<dbReference type="CDD" id="cd00109">
    <property type="entry name" value="Kunitz-type"/>
    <property type="match status" value="1"/>
</dbReference>
<dbReference type="Gene3D" id="4.10.75.10">
    <property type="entry name" value="Elafin-like"/>
    <property type="match status" value="3"/>
</dbReference>
<dbReference type="Gene3D" id="4.10.410.10">
    <property type="entry name" value="Pancreatic trypsin inhibitor Kunitz domain"/>
    <property type="match status" value="1"/>
</dbReference>
<dbReference type="InterPro" id="IPR036645">
    <property type="entry name" value="Elafin-like_sf"/>
</dbReference>
<dbReference type="InterPro" id="IPR002223">
    <property type="entry name" value="Kunitz_BPTI"/>
</dbReference>
<dbReference type="InterPro" id="IPR036880">
    <property type="entry name" value="Kunitz_BPTI_sf"/>
</dbReference>
<dbReference type="InterPro" id="IPR020901">
    <property type="entry name" value="Prtase_inh_Kunz-CS"/>
</dbReference>
<dbReference type="InterPro" id="IPR008197">
    <property type="entry name" value="WAP_dom"/>
</dbReference>
<dbReference type="PANTHER" id="PTHR47769">
    <property type="entry name" value="WAP FOUR-DISULFIDE CORE DOMAIN PROTEIN 8"/>
    <property type="match status" value="1"/>
</dbReference>
<dbReference type="PANTHER" id="PTHR47769:SF1">
    <property type="entry name" value="WAP FOUR-DISULFIDE CORE DOMAIN PROTEIN 8"/>
    <property type="match status" value="1"/>
</dbReference>
<dbReference type="Pfam" id="PF00014">
    <property type="entry name" value="Kunitz_BPTI"/>
    <property type="match status" value="1"/>
</dbReference>
<dbReference type="Pfam" id="PF00095">
    <property type="entry name" value="WAP"/>
    <property type="match status" value="3"/>
</dbReference>
<dbReference type="PRINTS" id="PR00003">
    <property type="entry name" value="4DISULPHCORE"/>
</dbReference>
<dbReference type="PRINTS" id="PR00759">
    <property type="entry name" value="BASICPTASE"/>
</dbReference>
<dbReference type="SMART" id="SM00131">
    <property type="entry name" value="KU"/>
    <property type="match status" value="1"/>
</dbReference>
<dbReference type="SMART" id="SM00217">
    <property type="entry name" value="WAP"/>
    <property type="match status" value="3"/>
</dbReference>
<dbReference type="SUPFAM" id="SSF57362">
    <property type="entry name" value="BPTI-like"/>
    <property type="match status" value="1"/>
</dbReference>
<dbReference type="SUPFAM" id="SSF57256">
    <property type="entry name" value="Elafin-like"/>
    <property type="match status" value="3"/>
</dbReference>
<dbReference type="PROSITE" id="PS00280">
    <property type="entry name" value="BPTI_KUNITZ_1"/>
    <property type="match status" value="1"/>
</dbReference>
<dbReference type="PROSITE" id="PS50279">
    <property type="entry name" value="BPTI_KUNITZ_2"/>
    <property type="match status" value="1"/>
</dbReference>
<dbReference type="PROSITE" id="PS51390">
    <property type="entry name" value="WAP"/>
    <property type="match status" value="3"/>
</dbReference>